<feature type="chain" id="PRO_0000282438" description="Small integral membrane protein 43">
    <location>
        <begin position="1" status="less than"/>
        <end position="27"/>
    </location>
</feature>
<feature type="region of interest" description="Important for interaction with SLC2A1 and SLC2A3" evidence="1">
    <location>
        <begin position="15"/>
        <end position="21"/>
    </location>
</feature>
<feature type="non-terminal residue">
    <location>
        <position position="1"/>
    </location>
</feature>
<protein>
    <recommendedName>
        <fullName evidence="2">Small integral membrane protein 43</fullName>
    </recommendedName>
    <alternativeName>
        <fullName evidence="1">Nodal enhanced mesendoderm micropeptide</fullName>
        <shortName evidence="1">NEMEP</shortName>
    </alternativeName>
</protein>
<name>SIM43_PONAB</name>
<proteinExistence type="evidence at transcript level"/>
<organism>
    <name type="scientific">Pongo abelii</name>
    <name type="common">Sumatran orangutan</name>
    <name type="synonym">Pongo pygmaeus abelii</name>
    <dbReference type="NCBI Taxonomy" id="9601"/>
    <lineage>
        <taxon>Eukaryota</taxon>
        <taxon>Metazoa</taxon>
        <taxon>Chordata</taxon>
        <taxon>Craniata</taxon>
        <taxon>Vertebrata</taxon>
        <taxon>Euteleostomi</taxon>
        <taxon>Mammalia</taxon>
        <taxon>Eutheria</taxon>
        <taxon>Euarchontoglires</taxon>
        <taxon>Primates</taxon>
        <taxon>Haplorrhini</taxon>
        <taxon>Catarrhini</taxon>
        <taxon>Hominidae</taxon>
        <taxon>Pongo</taxon>
    </lineage>
</organism>
<dbReference type="EMBL" id="CR860392">
    <property type="protein sequence ID" value="CAH92518.1"/>
    <property type="status" value="ALT_SEQ"/>
    <property type="molecule type" value="mRNA"/>
</dbReference>
<dbReference type="EMBL" id="CR861050">
    <property type="protein sequence ID" value="CAH93138.1"/>
    <property type="status" value="ALT_SEQ"/>
    <property type="molecule type" value="mRNA"/>
</dbReference>
<dbReference type="EMBL" id="CR861105">
    <property type="protein sequence ID" value="CAH93183.1"/>
    <property type="status" value="ALT_SEQ"/>
    <property type="molecule type" value="mRNA"/>
</dbReference>
<dbReference type="EMBL" id="CR861311">
    <property type="protein sequence ID" value="CAH93377.1"/>
    <property type="status" value="ALT_SEQ"/>
    <property type="molecule type" value="mRNA"/>
</dbReference>
<dbReference type="EMBL" id="CR925968">
    <property type="protein sequence ID" value="CAI29619.1"/>
    <property type="status" value="ALT_SEQ"/>
    <property type="molecule type" value="mRNA"/>
</dbReference>
<dbReference type="EMBL" id="CR926066">
    <property type="protein sequence ID" value="CAI29694.1"/>
    <property type="status" value="ALT_SEQ"/>
    <property type="molecule type" value="mRNA"/>
</dbReference>
<dbReference type="EMBL" id="CR926106">
    <property type="protein sequence ID" value="CAI29732.1"/>
    <property type="status" value="ALT_SEQ"/>
    <property type="molecule type" value="mRNA"/>
</dbReference>
<dbReference type="RefSeq" id="NP_001127639.1">
    <property type="nucleotide sequence ID" value="NM_001134167.1"/>
</dbReference>
<dbReference type="RefSeq" id="XP_009238565.1">
    <property type="nucleotide sequence ID" value="XM_009240290.1"/>
</dbReference>
<dbReference type="GeneID" id="100174719"/>
<dbReference type="KEGG" id="pon:100174719"/>
<dbReference type="CTD" id="132332"/>
<dbReference type="eggNOG" id="ENOG502R363">
    <property type="taxonomic scope" value="Eukaryota"/>
</dbReference>
<dbReference type="InParanoid" id="Q5R4Y3"/>
<dbReference type="OrthoDB" id="9530778at2759"/>
<dbReference type="Proteomes" id="UP000001595">
    <property type="component" value="Unplaced"/>
</dbReference>
<dbReference type="GO" id="GO:0005886">
    <property type="term" value="C:plasma membrane"/>
    <property type="evidence" value="ECO:0000250"/>
    <property type="project" value="UniProtKB"/>
</dbReference>
<dbReference type="GO" id="GO:0048382">
    <property type="term" value="P:mesendoderm development"/>
    <property type="evidence" value="ECO:0000250"/>
    <property type="project" value="UniProtKB"/>
</dbReference>
<dbReference type="InterPro" id="IPR054149">
    <property type="entry name" value="SMIM43"/>
</dbReference>
<dbReference type="Pfam" id="PF21976">
    <property type="entry name" value="SMIM43"/>
    <property type="match status" value="1"/>
</dbReference>
<accession>Q5R4Y3</accession>
<accession>Q5NVP4</accession>
<accession>Q5R4D9</accession>
<accession>Q5R528</accession>
<accession>Q5R6U2</accession>
<comment type="function">
    <text evidence="1">Required for mesendoderm differentiation. Interacts with glucose transporters and promotes glucose uptake. Probably augments the glucose uptake capacity of glucose transporter proteins to meet the energy needs of mesendoderm differentiation.</text>
</comment>
<comment type="subunit">
    <text evidence="1">Interacts with glucose transporters SLC2A1/GLUT1 and SLC2A3/GLUT3; the interactions may promote SLC2A1- and SLC2A3-mediated glucose transport to meet the energy needs of mesendoderm differentiation.</text>
</comment>
<comment type="subcellular location">
    <subcellularLocation>
        <location evidence="1">Cell membrane</location>
        <topology evidence="3">Single-pass membrane protein</topology>
    </subcellularLocation>
</comment>
<comment type="sequence caution" evidence="4">
    <conflict type="erroneous translation">
        <sequence resource="EMBL-CDS" id="CAH92518"/>
    </conflict>
    <text>Wrong choice of CDS.</text>
</comment>
<comment type="sequence caution" evidence="4">
    <conflict type="erroneous translation">
        <sequence resource="EMBL-CDS" id="CAH93138"/>
    </conflict>
    <text>Wrong choice of CDS.</text>
</comment>
<comment type="sequence caution" evidence="4">
    <conflict type="erroneous translation">
        <sequence resource="EMBL-CDS" id="CAH93183"/>
    </conflict>
    <text>Wrong choice of CDS.</text>
</comment>
<comment type="sequence caution" evidence="4">
    <conflict type="erroneous translation">
        <sequence resource="EMBL-CDS" id="CAH93377"/>
    </conflict>
    <text>Wrong choice of CDS.</text>
</comment>
<comment type="sequence caution" evidence="4">
    <conflict type="erroneous translation">
        <sequence resource="EMBL-CDS" id="CAI29619"/>
    </conflict>
    <text>Wrong choice of CDS.</text>
</comment>
<comment type="sequence caution" evidence="4">
    <conflict type="erroneous translation">
        <sequence resource="EMBL-CDS" id="CAI29694"/>
    </conflict>
    <text>Wrong choice of CDS.</text>
</comment>
<comment type="sequence caution" evidence="4">
    <conflict type="erroneous translation">
        <sequence resource="EMBL-CDS" id="CAI29732"/>
    </conflict>
    <text>Wrong choice of CDS.</text>
</comment>
<reference key="1">
    <citation type="submission" date="2004-11" db="EMBL/GenBank/DDBJ databases">
        <authorList>
            <consortium name="The German cDNA consortium"/>
        </authorList>
    </citation>
    <scope>NUCLEOTIDE SEQUENCE [LARGE SCALE MRNA]</scope>
    <source>
        <tissue>Brain cortex</tissue>
    </source>
</reference>
<evidence type="ECO:0000250" key="1">
    <source>
        <dbReference type="UniProtKB" id="A0A286YD83"/>
    </source>
</evidence>
<evidence type="ECO:0000250" key="2">
    <source>
        <dbReference type="UniProtKB" id="Q4W5P6"/>
    </source>
</evidence>
<evidence type="ECO:0000255" key="3"/>
<evidence type="ECO:0000305" key="4"/>
<keyword id="KW-1003">Cell membrane</keyword>
<keyword id="KW-0472">Membrane</keyword>
<keyword id="KW-1185">Reference proteome</keyword>
<sequence length="27" mass="2934">AITAGALQPGRLSVHREPWGFSREQAV</sequence>
<gene>
    <name evidence="2" type="primary">SMIM43</name>
    <name evidence="2" type="synonym">TMEM155</name>
</gene>